<proteinExistence type="inferred from homology"/>
<feature type="chain" id="PRO_0000105945" description="Sulfate adenylyltransferase">
    <location>
        <begin position="1"/>
        <end position="383"/>
    </location>
</feature>
<evidence type="ECO:0000305" key="1"/>
<name>SAT_AERPE</name>
<protein>
    <recommendedName>
        <fullName>Sulfate adenylyltransferase</fullName>
        <ecNumber>2.7.7.4</ecNumber>
    </recommendedName>
    <alternativeName>
        <fullName>ATP-sulfurylase</fullName>
    </alternativeName>
    <alternativeName>
        <fullName>Sulfate adenylate transferase</fullName>
        <shortName>SAT</shortName>
    </alternativeName>
</protein>
<dbReference type="EC" id="2.7.7.4"/>
<dbReference type="EMBL" id="BA000002">
    <property type="protein sequence ID" value="BAA80183.2"/>
    <property type="molecule type" value="Genomic_DNA"/>
</dbReference>
<dbReference type="PIR" id="A72591">
    <property type="entry name" value="A72591"/>
</dbReference>
<dbReference type="RefSeq" id="WP_010866222.1">
    <property type="nucleotide sequence ID" value="NC_000854.2"/>
</dbReference>
<dbReference type="SMR" id="Q9YCR4"/>
<dbReference type="STRING" id="272557.APE_1197.1"/>
<dbReference type="EnsemblBacteria" id="BAA80183">
    <property type="protein sequence ID" value="BAA80183"/>
    <property type="gene ID" value="APE_1197.1"/>
</dbReference>
<dbReference type="GeneID" id="1445851"/>
<dbReference type="KEGG" id="ape:APE_1197.1"/>
<dbReference type="PATRIC" id="fig|272557.25.peg.826"/>
<dbReference type="eggNOG" id="arCOG04191">
    <property type="taxonomic scope" value="Archaea"/>
</dbReference>
<dbReference type="UniPathway" id="UPA00140">
    <property type="reaction ID" value="UER00204"/>
</dbReference>
<dbReference type="Proteomes" id="UP000002518">
    <property type="component" value="Chromosome"/>
</dbReference>
<dbReference type="GO" id="GO:0005524">
    <property type="term" value="F:ATP binding"/>
    <property type="evidence" value="ECO:0007669"/>
    <property type="project" value="UniProtKB-KW"/>
</dbReference>
<dbReference type="GO" id="GO:0004781">
    <property type="term" value="F:sulfate adenylyltransferase (ATP) activity"/>
    <property type="evidence" value="ECO:0007669"/>
    <property type="project" value="UniProtKB-UniRule"/>
</dbReference>
<dbReference type="GO" id="GO:0070814">
    <property type="term" value="P:hydrogen sulfide biosynthetic process"/>
    <property type="evidence" value="ECO:0007669"/>
    <property type="project" value="UniProtKB-UniRule"/>
</dbReference>
<dbReference type="GO" id="GO:0000103">
    <property type="term" value="P:sulfate assimilation"/>
    <property type="evidence" value="ECO:0007669"/>
    <property type="project" value="UniProtKB-UniRule"/>
</dbReference>
<dbReference type="CDD" id="cd00517">
    <property type="entry name" value="ATPS"/>
    <property type="match status" value="1"/>
</dbReference>
<dbReference type="Gene3D" id="3.40.50.620">
    <property type="entry name" value="HUPs"/>
    <property type="match status" value="1"/>
</dbReference>
<dbReference type="Gene3D" id="3.10.400.10">
    <property type="entry name" value="Sulfate adenylyltransferase"/>
    <property type="match status" value="1"/>
</dbReference>
<dbReference type="HAMAP" id="MF_00066">
    <property type="entry name" value="Sulf_adenylyltr"/>
    <property type="match status" value="1"/>
</dbReference>
<dbReference type="InterPro" id="IPR025980">
    <property type="entry name" value="ATP-Sase_PUA-like_dom"/>
</dbReference>
<dbReference type="InterPro" id="IPR015947">
    <property type="entry name" value="PUA-like_sf"/>
</dbReference>
<dbReference type="InterPro" id="IPR014729">
    <property type="entry name" value="Rossmann-like_a/b/a_fold"/>
</dbReference>
<dbReference type="InterPro" id="IPR020792">
    <property type="entry name" value="SO4_adenylyltransferase_pro"/>
</dbReference>
<dbReference type="InterPro" id="IPR024951">
    <property type="entry name" value="Sulfurylase_cat_dom"/>
</dbReference>
<dbReference type="InterPro" id="IPR002650">
    <property type="entry name" value="Sulphate_adenylyltransferase"/>
</dbReference>
<dbReference type="NCBIfam" id="NF003166">
    <property type="entry name" value="PRK04149.1"/>
    <property type="match status" value="1"/>
</dbReference>
<dbReference type="NCBIfam" id="TIGR00339">
    <property type="entry name" value="sopT"/>
    <property type="match status" value="1"/>
</dbReference>
<dbReference type="PANTHER" id="PTHR43509">
    <property type="match status" value="1"/>
</dbReference>
<dbReference type="PANTHER" id="PTHR43509:SF1">
    <property type="entry name" value="SULFATE ADENYLYLTRANSFERASE"/>
    <property type="match status" value="1"/>
</dbReference>
<dbReference type="Pfam" id="PF01747">
    <property type="entry name" value="ATP-sulfurylase"/>
    <property type="match status" value="1"/>
</dbReference>
<dbReference type="Pfam" id="PF14306">
    <property type="entry name" value="PUA_2"/>
    <property type="match status" value="1"/>
</dbReference>
<dbReference type="SUPFAM" id="SSF52374">
    <property type="entry name" value="Nucleotidylyl transferase"/>
    <property type="match status" value="1"/>
</dbReference>
<dbReference type="SUPFAM" id="SSF88697">
    <property type="entry name" value="PUA domain-like"/>
    <property type="match status" value="1"/>
</dbReference>
<organism>
    <name type="scientific">Aeropyrum pernix (strain ATCC 700893 / DSM 11879 / JCM 9820 / NBRC 100138 / K1)</name>
    <dbReference type="NCBI Taxonomy" id="272557"/>
    <lineage>
        <taxon>Archaea</taxon>
        <taxon>Thermoproteota</taxon>
        <taxon>Thermoprotei</taxon>
        <taxon>Desulfurococcales</taxon>
        <taxon>Desulfurococcaceae</taxon>
        <taxon>Aeropyrum</taxon>
    </lineage>
</organism>
<sequence>MVSRPHGGRLVRRVLSGRRREIFESQYREMPRLEVPLERAIDAEDLARGVFSPLEGFMVEDDYLSVLSRMRLSNDLPWTIPIVLDANREWVLNEGVSAGDDIILTYHGLPIAVLTLEDIYSWDKGLHAEKVFKTRDPNHPGVEATYKRGDILLGGRLELIQGPPNPLERYTLWPVETRVLFKEKGWRTVAAFQTRNVPHLGHEYVQKAALTFVDGLLVHPLAGWKKRGDYRDEVIIRAYEALITHYYPRGVVVLSVLRMNMNYAGPREAVHHAIVRKNFGATHFIVGRDHAGVGSYYGPYEAWEIFREFPDLGITPLFVREAYYCRRCGGMVNEKVCPHGDEYRVRISGTRLREMLGRGERPPEYMMRPEVADAIISHPDPFI</sequence>
<accession>Q9YCR4</accession>
<reference key="1">
    <citation type="journal article" date="1999" name="DNA Res.">
        <title>Complete genome sequence of an aerobic hyper-thermophilic crenarchaeon, Aeropyrum pernix K1.</title>
        <authorList>
            <person name="Kawarabayasi Y."/>
            <person name="Hino Y."/>
            <person name="Horikawa H."/>
            <person name="Yamazaki S."/>
            <person name="Haikawa Y."/>
            <person name="Jin-no K."/>
            <person name="Takahashi M."/>
            <person name="Sekine M."/>
            <person name="Baba S."/>
            <person name="Ankai A."/>
            <person name="Kosugi H."/>
            <person name="Hosoyama A."/>
            <person name="Fukui S."/>
            <person name="Nagai Y."/>
            <person name="Nishijima K."/>
            <person name="Nakazawa H."/>
            <person name="Takamiya M."/>
            <person name="Masuda S."/>
            <person name="Funahashi T."/>
            <person name="Tanaka T."/>
            <person name="Kudoh Y."/>
            <person name="Yamazaki J."/>
            <person name="Kushida N."/>
            <person name="Oguchi A."/>
            <person name="Aoki K."/>
            <person name="Kubota K."/>
            <person name="Nakamura Y."/>
            <person name="Nomura N."/>
            <person name="Sako Y."/>
            <person name="Kikuchi H."/>
        </authorList>
    </citation>
    <scope>NUCLEOTIDE SEQUENCE [LARGE SCALE GENOMIC DNA]</scope>
    <source>
        <strain>ATCC 700893 / DSM 11879 / JCM 9820 / NBRC 100138 / K1</strain>
    </source>
</reference>
<gene>
    <name type="primary">sat</name>
    <name type="ordered locus">APE_1197.1</name>
</gene>
<comment type="catalytic activity">
    <reaction>
        <text>sulfate + ATP + H(+) = adenosine 5'-phosphosulfate + diphosphate</text>
        <dbReference type="Rhea" id="RHEA:18133"/>
        <dbReference type="ChEBI" id="CHEBI:15378"/>
        <dbReference type="ChEBI" id="CHEBI:16189"/>
        <dbReference type="ChEBI" id="CHEBI:30616"/>
        <dbReference type="ChEBI" id="CHEBI:33019"/>
        <dbReference type="ChEBI" id="CHEBI:58243"/>
        <dbReference type="EC" id="2.7.7.4"/>
    </reaction>
</comment>
<comment type="pathway">
    <text>Sulfur metabolism; hydrogen sulfide biosynthesis; sulfite from sulfate: step 1/3.</text>
</comment>
<comment type="similarity">
    <text evidence="1">Belongs to the sulfate adenylyltransferase family.</text>
</comment>
<keyword id="KW-0067">ATP-binding</keyword>
<keyword id="KW-0547">Nucleotide-binding</keyword>
<keyword id="KW-0548">Nucleotidyltransferase</keyword>
<keyword id="KW-1185">Reference proteome</keyword>
<keyword id="KW-0808">Transferase</keyword>